<evidence type="ECO:0000250" key="1">
    <source>
        <dbReference type="UniProtKB" id="Q9NUN5"/>
    </source>
</evidence>
<evidence type="ECO:0000255" key="2"/>
<evidence type="ECO:0000269" key="3">
    <source>
    </source>
</evidence>
<evidence type="ECO:0000269" key="4">
    <source>
    </source>
</evidence>
<evidence type="ECO:0000303" key="5">
    <source>
    </source>
</evidence>
<evidence type="ECO:0000303" key="6">
    <source>
    </source>
</evidence>
<evidence type="ECO:0000303" key="7">
    <source ref="1"/>
</evidence>
<evidence type="ECO:0000305" key="8"/>
<evidence type="ECO:0000312" key="9">
    <source>
        <dbReference type="MGI" id="MGI:1915671"/>
    </source>
</evidence>
<evidence type="ECO:0007744" key="10">
    <source>
    </source>
</evidence>
<evidence type="ECO:0007744" key="11">
    <source>
    </source>
</evidence>
<feature type="chain" id="PRO_0000260517" description="Lysosomal cobalamin transport escort protein LMBD1">
    <location>
        <begin position="1"/>
        <end position="537"/>
    </location>
</feature>
<feature type="topological domain" description="Extracellular" evidence="2">
    <location>
        <begin position="1"/>
        <end position="7"/>
    </location>
</feature>
<feature type="transmembrane region" description="Helical; Name=1" evidence="2">
    <location>
        <begin position="8"/>
        <end position="28"/>
    </location>
</feature>
<feature type="topological domain" description="Cytoplasmic" evidence="2">
    <location>
        <begin position="29"/>
        <end position="47"/>
    </location>
</feature>
<feature type="transmembrane region" description="Helical; Name=2" evidence="2">
    <location>
        <begin position="48"/>
        <end position="68"/>
    </location>
</feature>
<feature type="topological domain" description="Extracellular" evidence="2">
    <location>
        <begin position="69"/>
        <end position="97"/>
    </location>
</feature>
<feature type="transmembrane region" description="Helical; Name=3" evidence="2">
    <location>
        <begin position="98"/>
        <end position="118"/>
    </location>
</feature>
<feature type="topological domain" description="Cytoplasmic" evidence="2">
    <location>
        <begin position="119"/>
        <end position="141"/>
    </location>
</feature>
<feature type="transmembrane region" description="Helical; Name=4" evidence="2">
    <location>
        <begin position="142"/>
        <end position="162"/>
    </location>
</feature>
<feature type="topological domain" description="Extracellular" evidence="2">
    <location>
        <begin position="163"/>
        <end position="185"/>
    </location>
</feature>
<feature type="transmembrane region" description="Helical; Name=5" evidence="2">
    <location>
        <begin position="186"/>
        <end position="206"/>
    </location>
</feature>
<feature type="topological domain" description="Cytoplasmic" evidence="2">
    <location>
        <begin position="207"/>
        <end position="302"/>
    </location>
</feature>
<feature type="transmembrane region" description="Helical; Name=6" evidence="2">
    <location>
        <begin position="303"/>
        <end position="323"/>
    </location>
</feature>
<feature type="topological domain" description="Extracellular" evidence="2">
    <location>
        <begin position="324"/>
        <end position="361"/>
    </location>
</feature>
<feature type="transmembrane region" description="Helical; Name=7" evidence="2">
    <location>
        <begin position="362"/>
        <end position="382"/>
    </location>
</feature>
<feature type="topological domain" description="Cytoplasmic" evidence="2">
    <location>
        <begin position="383"/>
        <end position="405"/>
    </location>
</feature>
<feature type="transmembrane region" description="Helical; Name=8" evidence="2">
    <location>
        <begin position="406"/>
        <end position="426"/>
    </location>
</feature>
<feature type="topological domain" description="Extracellular" evidence="2">
    <location>
        <begin position="427"/>
        <end position="483"/>
    </location>
</feature>
<feature type="transmembrane region" description="Helical; Name=9" evidence="2">
    <location>
        <begin position="484"/>
        <end position="504"/>
    </location>
</feature>
<feature type="topological domain" description="Cytoplasmic" evidence="2">
    <location>
        <begin position="505"/>
        <end position="537"/>
    </location>
</feature>
<feature type="short sequence motif" description="YERL motif; mediates interaction with adapter protein complex 2 and is essential for its function in clathrin-mediated endocytosis of INSR" evidence="3">
    <location>
        <begin position="229"/>
        <end position="232"/>
    </location>
</feature>
<feature type="short sequence motif" description="WTKF motif; mediates interaction with adapter protein complex 2 and is essential for its function in clathrin-mediated endocytosis of INSR" evidence="3">
    <location>
        <begin position="291"/>
        <end position="294"/>
    </location>
</feature>
<feature type="modified residue" description="Phosphothreonine" evidence="10">
    <location>
        <position position="235"/>
    </location>
</feature>
<feature type="modified residue" description="Phosphoserine" evidence="11">
    <location>
        <position position="525"/>
    </location>
</feature>
<feature type="modified residue" description="Phosphoserine" evidence="11">
    <location>
        <position position="528"/>
    </location>
</feature>
<feature type="glycosylation site" description="N-linked (GlcNAc...) asparagine" evidence="2">
    <location>
        <position position="75"/>
    </location>
</feature>
<feature type="glycosylation site" description="N-linked (GlcNAc...) asparagine" evidence="2">
    <location>
        <position position="85"/>
    </location>
</feature>
<feature type="glycosylation site" description="N-linked (GlcNAc...) asparagine" evidence="2">
    <location>
        <position position="166"/>
    </location>
</feature>
<feature type="glycosylation site" description="N-linked (GlcNAc...) asparagine" evidence="2">
    <location>
        <position position="167"/>
    </location>
</feature>
<feature type="glycosylation site" description="N-linked (GlcNAc...) asparagine" evidence="2">
    <location>
        <position position="344"/>
    </location>
</feature>
<feature type="glycosylation site" description="N-linked (GlcNAc...) asparagine" evidence="2">
    <location>
        <position position="445"/>
    </location>
</feature>
<feature type="glycosylation site" description="N-linked (GlcNAc...) asparagine" evidence="2">
    <location>
        <position position="454"/>
    </location>
</feature>
<feature type="splice variant" id="VSP_021631" description="In isoform 3." evidence="5 6 7">
    <location>
        <begin position="1"/>
        <end position="70"/>
    </location>
</feature>
<feature type="splice variant" id="VSP_021632" description="In isoform 2." evidence="6">
    <location>
        <begin position="1"/>
        <end position="18"/>
    </location>
</feature>
<feature type="splice variant" id="VSP_021633" description="In isoform 2." evidence="6">
    <original>LL</original>
    <variation>MQ</variation>
    <location>
        <begin position="19"/>
        <end position="20"/>
    </location>
</feature>
<feature type="mutagenesis site" description="Significantly reduced interaction with adapter protein complex 2 and disruption of its function in clathrin-mediated endocytosis of INSR." evidence="3">
    <original>Y</original>
    <variation>A</variation>
    <location>
        <position position="229"/>
    </location>
</feature>
<feature type="mutagenesis site" description="Significantly reduced interaction with adapter protein complex 2 and disruption of its function in clathrin-mediated endocytosis of INSR." evidence="3">
    <original>W</original>
    <variation>A</variation>
    <location>
        <position position="291"/>
    </location>
</feature>
<feature type="sequence conflict" description="In Ref. 2; BAC27926." evidence="8" ref="2">
    <original>P</original>
    <variation>L</variation>
    <location>
        <position position="62"/>
    </location>
</feature>
<feature type="sequence conflict" description="In Ref. 1; AAL38052." evidence="8" ref="1">
    <original>K</original>
    <variation>Q</variation>
    <location>
        <position position="173"/>
    </location>
</feature>
<feature type="sequence conflict" description="In Ref. 1; AAL38052." evidence="8" ref="1">
    <original>S</original>
    <variation>P</variation>
    <location>
        <position position="193"/>
    </location>
</feature>
<feature type="sequence conflict" description="In Ref. 2; BAE31002/BAE31829." evidence="8" ref="2">
    <original>G</original>
    <variation>D</variation>
    <location>
        <position position="386"/>
    </location>
</feature>
<feature type="sequence conflict" description="In Ref. 2; BAB22556." evidence="8" ref="2">
    <original>W</original>
    <variation>R</variation>
    <location>
        <position position="496"/>
    </location>
</feature>
<dbReference type="EMBL" id="AY061989">
    <property type="protein sequence ID" value="AAL38052.1"/>
    <property type="molecule type" value="mRNA"/>
</dbReference>
<dbReference type="EMBL" id="AK003084">
    <property type="protein sequence ID" value="BAB22556.1"/>
    <property type="molecule type" value="mRNA"/>
</dbReference>
<dbReference type="EMBL" id="AK032560">
    <property type="protein sequence ID" value="BAC27926.1"/>
    <property type="molecule type" value="mRNA"/>
</dbReference>
<dbReference type="EMBL" id="AK152170">
    <property type="protein sequence ID" value="BAE31002.1"/>
    <property type="molecule type" value="mRNA"/>
</dbReference>
<dbReference type="EMBL" id="AK153237">
    <property type="protein sequence ID" value="BAE31829.1"/>
    <property type="molecule type" value="mRNA"/>
</dbReference>
<dbReference type="EMBL" id="AK158982">
    <property type="protein sequence ID" value="BAE34756.1"/>
    <property type="molecule type" value="mRNA"/>
</dbReference>
<dbReference type="EMBL" id="AK167080">
    <property type="protein sequence ID" value="BAE39240.1"/>
    <property type="molecule type" value="mRNA"/>
</dbReference>
<dbReference type="EMBL" id="BC025579">
    <property type="protein sequence ID" value="AAH25579.1"/>
    <property type="molecule type" value="mRNA"/>
</dbReference>
<dbReference type="EMBL" id="BC027774">
    <property type="protein sequence ID" value="AAH27774.1"/>
    <property type="molecule type" value="mRNA"/>
</dbReference>
<dbReference type="EMBL" id="BC031902">
    <property type="protein sequence ID" value="AAH31902.1"/>
    <property type="molecule type" value="mRNA"/>
</dbReference>
<dbReference type="EMBL" id="BC039053">
    <property type="protein sequence ID" value="AAH39053.1"/>
    <property type="molecule type" value="mRNA"/>
</dbReference>
<dbReference type="CCDS" id="CCDS35528.1">
    <molecule id="Q8K0B2-1"/>
</dbReference>
<dbReference type="CCDS" id="CCDS78556.1">
    <molecule id="Q8K0B2-3"/>
</dbReference>
<dbReference type="RefSeq" id="NP_001297412.1">
    <molecule id="Q8K0B2-3"/>
    <property type="nucleotide sequence ID" value="NM_001310483.1"/>
</dbReference>
<dbReference type="RefSeq" id="NP_080995.2">
    <molecule id="Q8K0B2-1"/>
    <property type="nucleotide sequence ID" value="NM_026719.2"/>
</dbReference>
<dbReference type="SMR" id="Q8K0B2"/>
<dbReference type="FunCoup" id="Q8K0B2">
    <property type="interactions" value="2285"/>
</dbReference>
<dbReference type="STRING" id="10090.ENSMUSP00000140783"/>
<dbReference type="GlyCosmos" id="Q8K0B2">
    <property type="glycosylation" value="7 sites, No reported glycans"/>
</dbReference>
<dbReference type="GlyGen" id="Q8K0B2">
    <property type="glycosylation" value="8 sites, 1 N-linked glycan (1 site), 1 O-linked glycan (1 site)"/>
</dbReference>
<dbReference type="iPTMnet" id="Q8K0B2"/>
<dbReference type="PhosphoSitePlus" id="Q8K0B2"/>
<dbReference type="SwissPalm" id="Q8K0B2"/>
<dbReference type="jPOST" id="Q8K0B2"/>
<dbReference type="PaxDb" id="10090-ENSMUSP00000140783"/>
<dbReference type="PeptideAtlas" id="Q8K0B2"/>
<dbReference type="ProteomicsDB" id="292339">
    <molecule id="Q8K0B2-1"/>
</dbReference>
<dbReference type="ProteomicsDB" id="292340">
    <molecule id="Q8K0B2-2"/>
</dbReference>
<dbReference type="ProteomicsDB" id="292341">
    <molecule id="Q8K0B2-3"/>
</dbReference>
<dbReference type="Pumba" id="Q8K0B2"/>
<dbReference type="Antibodypedia" id="17627">
    <property type="antibodies" value="84 antibodies from 25 providers"/>
</dbReference>
<dbReference type="DNASU" id="68421"/>
<dbReference type="Ensembl" id="ENSMUST00000095062.10">
    <molecule id="Q8K0B2-3"/>
    <property type="protein sequence ID" value="ENSMUSP00000092672.5"/>
    <property type="gene ID" value="ENSMUSG00000073725.9"/>
</dbReference>
<dbReference type="Ensembl" id="ENSMUST00000191471.7">
    <molecule id="Q8K0B2-1"/>
    <property type="protein sequence ID" value="ENSMUSP00000140783.2"/>
    <property type="gene ID" value="ENSMUSG00000073725.9"/>
</dbReference>
<dbReference type="GeneID" id="68421"/>
<dbReference type="KEGG" id="mmu:68421"/>
<dbReference type="UCSC" id="uc007amt.1">
    <molecule id="Q8K0B2-1"/>
    <property type="organism name" value="mouse"/>
</dbReference>
<dbReference type="AGR" id="MGI:1915671"/>
<dbReference type="CTD" id="55788"/>
<dbReference type="MGI" id="MGI:1915671">
    <property type="gene designation" value="Lmbrd1"/>
</dbReference>
<dbReference type="VEuPathDB" id="HostDB:ENSMUSG00000073725"/>
<dbReference type="eggNOG" id="ENOG502QQ2T">
    <property type="taxonomic scope" value="Eukaryota"/>
</dbReference>
<dbReference type="GeneTree" id="ENSGT00390000002581"/>
<dbReference type="HOGENOM" id="CLU_028341_1_0_1"/>
<dbReference type="InParanoid" id="Q8K0B2"/>
<dbReference type="OMA" id="FWAQFVF"/>
<dbReference type="OrthoDB" id="73273at2759"/>
<dbReference type="PhylomeDB" id="Q8K0B2"/>
<dbReference type="TreeFam" id="TF329170"/>
<dbReference type="Reactome" id="R-MMU-9758881">
    <property type="pathway name" value="Uptake of dietary cobalamins into enterocytes"/>
</dbReference>
<dbReference type="Reactome" id="R-MMU-9758890">
    <property type="pathway name" value="Transport of RCbl within the body"/>
</dbReference>
<dbReference type="BioGRID-ORCS" id="68421">
    <property type="hits" value="3 hits in 79 CRISPR screens"/>
</dbReference>
<dbReference type="ChiTaRS" id="Lmbrd1">
    <property type="organism name" value="mouse"/>
</dbReference>
<dbReference type="PRO" id="PR:Q8K0B2"/>
<dbReference type="Proteomes" id="UP000000589">
    <property type="component" value="Chromosome 1"/>
</dbReference>
<dbReference type="RNAct" id="Q8K0B2">
    <property type="molecule type" value="protein"/>
</dbReference>
<dbReference type="Bgee" id="ENSMUSG00000073725">
    <property type="expression patterns" value="Expressed in saccule of membranous labyrinth and 245 other cell types or tissues"/>
</dbReference>
<dbReference type="ExpressionAtlas" id="Q8K0B2">
    <property type="expression patterns" value="baseline and differential"/>
</dbReference>
<dbReference type="GO" id="GO:0045334">
    <property type="term" value="C:clathrin-coated endocytic vesicle"/>
    <property type="evidence" value="ECO:0000314"/>
    <property type="project" value="MGI"/>
</dbReference>
<dbReference type="GO" id="GO:0030136">
    <property type="term" value="C:clathrin-coated vesicle"/>
    <property type="evidence" value="ECO:0000314"/>
    <property type="project" value="UniProtKB"/>
</dbReference>
<dbReference type="GO" id="GO:0005789">
    <property type="term" value="C:endoplasmic reticulum membrane"/>
    <property type="evidence" value="ECO:0000250"/>
    <property type="project" value="UniProtKB"/>
</dbReference>
<dbReference type="GO" id="GO:0005765">
    <property type="term" value="C:lysosomal membrane"/>
    <property type="evidence" value="ECO:0000250"/>
    <property type="project" value="UniProtKB"/>
</dbReference>
<dbReference type="GO" id="GO:0005764">
    <property type="term" value="C:lysosome"/>
    <property type="evidence" value="ECO:0000314"/>
    <property type="project" value="MGI"/>
</dbReference>
<dbReference type="GO" id="GO:0005886">
    <property type="term" value="C:plasma membrane"/>
    <property type="evidence" value="ECO:0000314"/>
    <property type="project" value="UniProtKB"/>
</dbReference>
<dbReference type="GO" id="GO:0035612">
    <property type="term" value="F:AP-2 adaptor complex binding"/>
    <property type="evidence" value="ECO:0000315"/>
    <property type="project" value="UniProtKB"/>
</dbReference>
<dbReference type="GO" id="GO:0032050">
    <property type="term" value="F:clathrin heavy chain binding"/>
    <property type="evidence" value="ECO:0000314"/>
    <property type="project" value="UniProtKB"/>
</dbReference>
<dbReference type="GO" id="GO:0031419">
    <property type="term" value="F:cobalamin binding"/>
    <property type="evidence" value="ECO:0007669"/>
    <property type="project" value="UniProtKB-KW"/>
</dbReference>
<dbReference type="GO" id="GO:0005158">
    <property type="term" value="F:insulin receptor binding"/>
    <property type="evidence" value="ECO:0000314"/>
    <property type="project" value="MGI"/>
</dbReference>
<dbReference type="GO" id="GO:0140318">
    <property type="term" value="F:protein transporter activity"/>
    <property type="evidence" value="ECO:0000266"/>
    <property type="project" value="MGI"/>
</dbReference>
<dbReference type="GO" id="GO:0072583">
    <property type="term" value="P:clathrin-dependent endocytosis"/>
    <property type="evidence" value="ECO:0000315"/>
    <property type="project" value="UniProtKB"/>
</dbReference>
<dbReference type="GO" id="GO:0007369">
    <property type="term" value="P:gastrulation"/>
    <property type="evidence" value="ECO:0000315"/>
    <property type="project" value="UniProtKB"/>
</dbReference>
<dbReference type="GO" id="GO:0038016">
    <property type="term" value="P:insulin receptor internalization"/>
    <property type="evidence" value="ECO:0000315"/>
    <property type="project" value="MGI"/>
</dbReference>
<dbReference type="GO" id="GO:0046325">
    <property type="term" value="P:negative regulation of D-glucose import"/>
    <property type="evidence" value="ECO:0000315"/>
    <property type="project" value="MGI"/>
</dbReference>
<dbReference type="GO" id="GO:0046627">
    <property type="term" value="P:negative regulation of insulin receptor signaling pathway"/>
    <property type="evidence" value="ECO:0000315"/>
    <property type="project" value="MGI"/>
</dbReference>
<dbReference type="GO" id="GO:0051898">
    <property type="term" value="P:negative regulation of phosphatidylinositol 3-kinase/protein kinase B signal transduction"/>
    <property type="evidence" value="ECO:0000315"/>
    <property type="project" value="MGI"/>
</dbReference>
<dbReference type="GO" id="GO:0061462">
    <property type="term" value="P:protein localization to lysosome"/>
    <property type="evidence" value="ECO:0000250"/>
    <property type="project" value="UniProtKB"/>
</dbReference>
<dbReference type="InterPro" id="IPR050854">
    <property type="entry name" value="LMBD1_LysCbl_Transport"/>
</dbReference>
<dbReference type="InterPro" id="IPR006876">
    <property type="entry name" value="LMBR1-like_membr_prot"/>
</dbReference>
<dbReference type="PANTHER" id="PTHR16130:SF2">
    <property type="entry name" value="LYSOSOMAL COBALAMIN TRANSPORT ESCORT PROTEIN LMBD1"/>
    <property type="match status" value="1"/>
</dbReference>
<dbReference type="PANTHER" id="PTHR16130">
    <property type="entry name" value="LYSOSOMAL COBALAMIN TRANSPORTER-RELATED"/>
    <property type="match status" value="1"/>
</dbReference>
<dbReference type="Pfam" id="PF04791">
    <property type="entry name" value="LMBR1"/>
    <property type="match status" value="1"/>
</dbReference>
<organism>
    <name type="scientific">Mus musculus</name>
    <name type="common">Mouse</name>
    <dbReference type="NCBI Taxonomy" id="10090"/>
    <lineage>
        <taxon>Eukaryota</taxon>
        <taxon>Metazoa</taxon>
        <taxon>Chordata</taxon>
        <taxon>Craniata</taxon>
        <taxon>Vertebrata</taxon>
        <taxon>Euteleostomi</taxon>
        <taxon>Mammalia</taxon>
        <taxon>Eutheria</taxon>
        <taxon>Euarchontoglires</taxon>
        <taxon>Glires</taxon>
        <taxon>Rodentia</taxon>
        <taxon>Myomorpha</taxon>
        <taxon>Muroidea</taxon>
        <taxon>Muridae</taxon>
        <taxon>Murinae</taxon>
        <taxon>Mus</taxon>
        <taxon>Mus</taxon>
    </lineage>
</organism>
<proteinExistence type="evidence at protein level"/>
<accession>Q8K0B2</accession>
<accession>Q3U696</accession>
<accession>Q8CCL7</accession>
<accession>Q8R3D6</accession>
<accession>Q8VH50</accession>
<accession>Q9CW67</accession>
<reference key="1">
    <citation type="submission" date="2001-11" db="EMBL/GenBank/DDBJ databases">
        <authorList>
            <person name="Yao R."/>
            <person name="Wang Y."/>
            <person name="You M."/>
        </authorList>
    </citation>
    <scope>NUCLEOTIDE SEQUENCE [MRNA] (ISOFORM 3)</scope>
    <source>
        <strain>A/J</strain>
    </source>
</reference>
<reference key="2">
    <citation type="journal article" date="2005" name="Science">
        <title>The transcriptional landscape of the mammalian genome.</title>
        <authorList>
            <person name="Carninci P."/>
            <person name="Kasukawa T."/>
            <person name="Katayama S."/>
            <person name="Gough J."/>
            <person name="Frith M.C."/>
            <person name="Maeda N."/>
            <person name="Oyama R."/>
            <person name="Ravasi T."/>
            <person name="Lenhard B."/>
            <person name="Wells C."/>
            <person name="Kodzius R."/>
            <person name="Shimokawa K."/>
            <person name="Bajic V.B."/>
            <person name="Brenner S.E."/>
            <person name="Batalov S."/>
            <person name="Forrest A.R."/>
            <person name="Zavolan M."/>
            <person name="Davis M.J."/>
            <person name="Wilming L.G."/>
            <person name="Aidinis V."/>
            <person name="Allen J.E."/>
            <person name="Ambesi-Impiombato A."/>
            <person name="Apweiler R."/>
            <person name="Aturaliya R.N."/>
            <person name="Bailey T.L."/>
            <person name="Bansal M."/>
            <person name="Baxter L."/>
            <person name="Beisel K.W."/>
            <person name="Bersano T."/>
            <person name="Bono H."/>
            <person name="Chalk A.M."/>
            <person name="Chiu K.P."/>
            <person name="Choudhary V."/>
            <person name="Christoffels A."/>
            <person name="Clutterbuck D.R."/>
            <person name="Crowe M.L."/>
            <person name="Dalla E."/>
            <person name="Dalrymple B.P."/>
            <person name="de Bono B."/>
            <person name="Della Gatta G."/>
            <person name="di Bernardo D."/>
            <person name="Down T."/>
            <person name="Engstrom P."/>
            <person name="Fagiolini M."/>
            <person name="Faulkner G."/>
            <person name="Fletcher C.F."/>
            <person name="Fukushima T."/>
            <person name="Furuno M."/>
            <person name="Futaki S."/>
            <person name="Gariboldi M."/>
            <person name="Georgii-Hemming P."/>
            <person name="Gingeras T.R."/>
            <person name="Gojobori T."/>
            <person name="Green R.E."/>
            <person name="Gustincich S."/>
            <person name="Harbers M."/>
            <person name="Hayashi Y."/>
            <person name="Hensch T.K."/>
            <person name="Hirokawa N."/>
            <person name="Hill D."/>
            <person name="Huminiecki L."/>
            <person name="Iacono M."/>
            <person name="Ikeo K."/>
            <person name="Iwama A."/>
            <person name="Ishikawa T."/>
            <person name="Jakt M."/>
            <person name="Kanapin A."/>
            <person name="Katoh M."/>
            <person name="Kawasawa Y."/>
            <person name="Kelso J."/>
            <person name="Kitamura H."/>
            <person name="Kitano H."/>
            <person name="Kollias G."/>
            <person name="Krishnan S.P."/>
            <person name="Kruger A."/>
            <person name="Kummerfeld S.K."/>
            <person name="Kurochkin I.V."/>
            <person name="Lareau L.F."/>
            <person name="Lazarevic D."/>
            <person name="Lipovich L."/>
            <person name="Liu J."/>
            <person name="Liuni S."/>
            <person name="McWilliam S."/>
            <person name="Madan Babu M."/>
            <person name="Madera M."/>
            <person name="Marchionni L."/>
            <person name="Matsuda H."/>
            <person name="Matsuzawa S."/>
            <person name="Miki H."/>
            <person name="Mignone F."/>
            <person name="Miyake S."/>
            <person name="Morris K."/>
            <person name="Mottagui-Tabar S."/>
            <person name="Mulder N."/>
            <person name="Nakano N."/>
            <person name="Nakauchi H."/>
            <person name="Ng P."/>
            <person name="Nilsson R."/>
            <person name="Nishiguchi S."/>
            <person name="Nishikawa S."/>
            <person name="Nori F."/>
            <person name="Ohara O."/>
            <person name="Okazaki Y."/>
            <person name="Orlando V."/>
            <person name="Pang K.C."/>
            <person name="Pavan W.J."/>
            <person name="Pavesi G."/>
            <person name="Pesole G."/>
            <person name="Petrovsky N."/>
            <person name="Piazza S."/>
            <person name="Reed J."/>
            <person name="Reid J.F."/>
            <person name="Ring B.Z."/>
            <person name="Ringwald M."/>
            <person name="Rost B."/>
            <person name="Ruan Y."/>
            <person name="Salzberg S.L."/>
            <person name="Sandelin A."/>
            <person name="Schneider C."/>
            <person name="Schoenbach C."/>
            <person name="Sekiguchi K."/>
            <person name="Semple C.A."/>
            <person name="Seno S."/>
            <person name="Sessa L."/>
            <person name="Sheng Y."/>
            <person name="Shibata Y."/>
            <person name="Shimada H."/>
            <person name="Shimada K."/>
            <person name="Silva D."/>
            <person name="Sinclair B."/>
            <person name="Sperling S."/>
            <person name="Stupka E."/>
            <person name="Sugiura K."/>
            <person name="Sultana R."/>
            <person name="Takenaka Y."/>
            <person name="Taki K."/>
            <person name="Tammoja K."/>
            <person name="Tan S.L."/>
            <person name="Tang S."/>
            <person name="Taylor M.S."/>
            <person name="Tegner J."/>
            <person name="Teichmann S.A."/>
            <person name="Ueda H.R."/>
            <person name="van Nimwegen E."/>
            <person name="Verardo R."/>
            <person name="Wei C.L."/>
            <person name="Yagi K."/>
            <person name="Yamanishi H."/>
            <person name="Zabarovsky E."/>
            <person name="Zhu S."/>
            <person name="Zimmer A."/>
            <person name="Hide W."/>
            <person name="Bult C."/>
            <person name="Grimmond S.M."/>
            <person name="Teasdale R.D."/>
            <person name="Liu E.T."/>
            <person name="Brusic V."/>
            <person name="Quackenbush J."/>
            <person name="Wahlestedt C."/>
            <person name="Mattick J.S."/>
            <person name="Hume D.A."/>
            <person name="Kai C."/>
            <person name="Sasaki D."/>
            <person name="Tomaru Y."/>
            <person name="Fukuda S."/>
            <person name="Kanamori-Katayama M."/>
            <person name="Suzuki M."/>
            <person name="Aoki J."/>
            <person name="Arakawa T."/>
            <person name="Iida J."/>
            <person name="Imamura K."/>
            <person name="Itoh M."/>
            <person name="Kato T."/>
            <person name="Kawaji H."/>
            <person name="Kawagashira N."/>
            <person name="Kawashima T."/>
            <person name="Kojima M."/>
            <person name="Kondo S."/>
            <person name="Konno H."/>
            <person name="Nakano K."/>
            <person name="Ninomiya N."/>
            <person name="Nishio T."/>
            <person name="Okada M."/>
            <person name="Plessy C."/>
            <person name="Shibata K."/>
            <person name="Shiraki T."/>
            <person name="Suzuki S."/>
            <person name="Tagami M."/>
            <person name="Waki K."/>
            <person name="Watahiki A."/>
            <person name="Okamura-Oho Y."/>
            <person name="Suzuki H."/>
            <person name="Kawai J."/>
            <person name="Hayashizaki Y."/>
        </authorList>
    </citation>
    <scope>NUCLEOTIDE SEQUENCE [LARGE SCALE MRNA] (ISOFORMS 1; 2 AND 3)</scope>
    <source>
        <strain>C57BL/6J</strain>
        <tissue>Bone marrow</tissue>
        <tissue>Olfactory bulb</tissue>
        <tissue>Spleen</tissue>
        <tissue>Visual cortex</tissue>
    </source>
</reference>
<reference key="3">
    <citation type="journal article" date="2004" name="Genome Res.">
        <title>The status, quality, and expansion of the NIH full-length cDNA project: the Mammalian Gene Collection (MGC).</title>
        <authorList>
            <consortium name="The MGC Project Team"/>
        </authorList>
    </citation>
    <scope>NUCLEOTIDE SEQUENCE [LARGE SCALE MRNA] (ISOFORMS 1 AND 3)</scope>
    <source>
        <strain>FVB/N-3</strain>
        <tissue>Eye</tissue>
        <tissue>Mammary tumor</tissue>
    </source>
</reference>
<reference key="4">
    <citation type="journal article" date="2009" name="Immunity">
        <title>The phagosomal proteome in interferon-gamma-activated macrophages.</title>
        <authorList>
            <person name="Trost M."/>
            <person name="English L."/>
            <person name="Lemieux S."/>
            <person name="Courcelles M."/>
            <person name="Desjardins M."/>
            <person name="Thibault P."/>
        </authorList>
    </citation>
    <scope>PHOSPHORYLATION [LARGE SCALE ANALYSIS] AT THR-235</scope>
    <scope>IDENTIFICATION BY MASS SPECTROMETRY [LARGE SCALE ANALYSIS]</scope>
</reference>
<reference key="5">
    <citation type="journal article" date="2010" name="Cell">
        <title>A tissue-specific atlas of mouse protein phosphorylation and expression.</title>
        <authorList>
            <person name="Huttlin E.L."/>
            <person name="Jedrychowski M.P."/>
            <person name="Elias J.E."/>
            <person name="Goswami T."/>
            <person name="Rad R."/>
            <person name="Beausoleil S.A."/>
            <person name="Villen J."/>
            <person name="Haas W."/>
            <person name="Sowa M.E."/>
            <person name="Gygi S.P."/>
        </authorList>
    </citation>
    <scope>PHOSPHORYLATION [LARGE SCALE ANALYSIS] AT SER-525 AND SER-528</scope>
    <scope>IDENTIFICATION BY MASS SPECTROMETRY [LARGE SCALE ANALYSIS]</scope>
    <source>
        <tissue>Brain</tissue>
        <tissue>Lung</tissue>
        <tissue>Spleen</tissue>
    </source>
</reference>
<reference key="6">
    <citation type="journal article" date="2013" name="J. Biol. Chem.">
        <title>LMBD1 protein serves as a specific adaptor for insulin receptor internalization.</title>
        <authorList>
            <person name="Tseng L.T."/>
            <person name="Lin C.L."/>
            <person name="Tzen K.Y."/>
            <person name="Chang S.C."/>
            <person name="Chang M.F."/>
        </authorList>
    </citation>
    <scope>FUNCTION</scope>
    <scope>SUBCELLULAR LOCATION</scope>
    <scope>INTERACTION WITH INSR; ADAPTER PROTEIN COMPLEX 2 AND CLATHRIN HEAVY CHAIN</scope>
    <scope>MUTAGENESIS OF TYR-229 AND TRP-291</scope>
    <scope>MOTIF</scope>
</reference>
<reference key="7">
    <citation type="journal article" date="2016" name="J. Cell. Mol. Med.">
        <title>Lmbrd1 expression is essential for the initiation of gastrulation.</title>
        <authorList>
            <person name="Buers I."/>
            <person name="Pennekamp P."/>
            <person name="Nitschke Y."/>
            <person name="Lowe C."/>
            <person name="Skryabin B.V."/>
            <person name="Rutsch F."/>
        </authorList>
    </citation>
    <scope>FUNCTION</scope>
    <scope>DISRUPTION PHENOTYPE</scope>
    <scope>DEVELOPMENTAL STAGE</scope>
</reference>
<name>LMBD1_MOUSE</name>
<comment type="function">
    <text evidence="1 3 4">Lysosomal membrane chaperone required to export cobalamin (vitamin B12) from the lysosome to the cytosol, allowing its conversion to cofactors. Targets ABCD4 transporter from the endoplasmic reticulum to the lysosome. Then forms a complex with lysosomal ABCD4 and cytoplasmic MMACHC to transport cobalamin across the lysosomal membrane (By similarity). Acts as an adapter protein which plays an important role in mediating and regulating the internalization of the insulin receptor (INSR) (PubMed:24078630). Involved in clathrin-mediated endocytosis of INSR via its interaction with adapter protein complex 2 (PubMed:24078630). Essential for the initiation of gastrulation and early formation of mesoderm structures during embryogenesis (PubMed:27061115).</text>
</comment>
<comment type="subunit">
    <text evidence="1 3">Interacts with ABCD4; this interaction induces the translocation of ABCD4 from the endoplasmic reticulum to the lysosome. Interacts with ABCD4 and MMACHC; this interaction ensures the transport of cobalamin from the lysosome to the cytoplasm (By similarity). Interacts with INSR, adapter protein complex 2 and clathrin heavy chain (PubMed:24078630).</text>
</comment>
<comment type="subcellular location">
    <subcellularLocation>
        <location evidence="1">Endoplasmic reticulum membrane</location>
    </subcellularLocation>
    <subcellularLocation>
        <location evidence="1">Lysosome membrane</location>
        <topology evidence="2">Multi-pass membrane protein</topology>
    </subcellularLocation>
    <subcellularLocation>
        <location evidence="3">Cell membrane</location>
        <topology evidence="2">Multi-pass membrane protein</topology>
    </subcellularLocation>
    <subcellularLocation>
        <location evidence="3">Cytoplasmic vesicle</location>
        <location evidence="3">Clathrin-coated vesicle</location>
    </subcellularLocation>
</comment>
<comment type="alternative products">
    <event type="alternative splicing"/>
    <isoform>
        <id>Q8K0B2-1</id>
        <name>1</name>
        <sequence type="displayed"/>
    </isoform>
    <isoform>
        <id>Q8K0B2-2</id>
        <name>2</name>
        <sequence type="described" ref="VSP_021632 VSP_021633"/>
    </isoform>
    <isoform>
        <id>Q8K0B2-3</id>
        <name>3</name>
        <sequence type="described" ref="VSP_021631"/>
    </isoform>
</comment>
<comment type="developmental stage">
    <text evidence="4">Ubiquitously expressed with strong signals in the primitive streak and in extraembryonic tissues at 7.5 dpc (PubMed:27061115). During further development, expression is strongest in the neuronal fold at 8.5 dpc (PubMed:27061115).</text>
</comment>
<comment type="PTM">
    <text evidence="1">N-glycosylated.</text>
</comment>
<comment type="disruption phenotype">
    <text evidence="4">Early embryonic lethality (PubMed:27061115). Embryos show an impaired initiation of gastrulation (PubMed:27061115).</text>
</comment>
<comment type="similarity">
    <text evidence="8">Belongs to the LIMR family. LMBRD1 subfamily.</text>
</comment>
<gene>
    <name evidence="9" type="primary">Lmbrd1</name>
</gene>
<protein>
    <recommendedName>
        <fullName evidence="1">Lysosomal cobalamin transport escort protein LMBD1</fullName>
        <shortName>LMBD1</shortName>
    </recommendedName>
    <alternativeName>
        <fullName>LMBR1 domain-containing protein 1</fullName>
    </alternativeName>
    <alternativeName>
        <fullName>Protein N90b</fullName>
    </alternativeName>
</protein>
<keyword id="KW-0025">Alternative splicing</keyword>
<keyword id="KW-1003">Cell membrane</keyword>
<keyword id="KW-0846">Cobalamin</keyword>
<keyword id="KW-0170">Cobalt</keyword>
<keyword id="KW-0968">Cytoplasmic vesicle</keyword>
<keyword id="KW-0217">Developmental protein</keyword>
<keyword id="KW-0254">Endocytosis</keyword>
<keyword id="KW-0256">Endoplasmic reticulum</keyword>
<keyword id="KW-0306">Gastrulation</keyword>
<keyword id="KW-0325">Glycoprotein</keyword>
<keyword id="KW-0458">Lysosome</keyword>
<keyword id="KW-0472">Membrane</keyword>
<keyword id="KW-0597">Phosphoprotein</keyword>
<keyword id="KW-1185">Reference proteome</keyword>
<keyword id="KW-0812">Transmembrane</keyword>
<keyword id="KW-1133">Transmembrane helix</keyword>
<keyword id="KW-0813">Transport</keyword>
<sequence length="537" mass="61062">MAAAAAELVIGWCIFGLLLLAILAFCWVYVRKYQSQRESEVVSTVTAIFSLAVALITSALLPVDIFLVSYMKNQNGTFKDWADANVTVQIENTVLYGYYTLYSVILFCVFFWIPFVYFYYEEKDEDDASKCTQIKTALKYTLGFVVICALLLLVGAFVPLHLPNNNNSTEWEKVKLLFEDLGTGQGLAALSFSISSLTLIGMLAAITYTAYGMSALPLNLIKGTRSTAYERLENTEDIEEVEQHIQTIRSKSKDGRPLPARDRRALKQCEERLRTLRKRERHLEFIENSWWTKFCGALRPLKIIWGIFFILVALLFVISLFLSNLDKALHSAGIDSGFIIFGTNLSNPLNMLLPLLQTVFPLDYILITIIIMYFIFTSMAGIRNIGIWFFWIRLYKIRRGRTRPQALLFLCMILLLIVLHTSYMIYSLAPQYVMYGSQNYLIESNITSDAHKGNSTLAVPKRCDADAPKDQCTVTRTYIFLHKFWFFSAAYYFGNWAFLVVFLIGLIVSCCKGKKSVIEGVDEDSDLSDDEPSAYSA</sequence>